<gene>
    <name type="primary">Dmrta1</name>
    <name type="synonym">Dmrt4</name>
</gene>
<organism>
    <name type="scientific">Mus musculus</name>
    <name type="common">Mouse</name>
    <dbReference type="NCBI Taxonomy" id="10090"/>
    <lineage>
        <taxon>Eukaryota</taxon>
        <taxon>Metazoa</taxon>
        <taxon>Chordata</taxon>
        <taxon>Craniata</taxon>
        <taxon>Vertebrata</taxon>
        <taxon>Euteleostomi</taxon>
        <taxon>Mammalia</taxon>
        <taxon>Eutheria</taxon>
        <taxon>Euarchontoglires</taxon>
        <taxon>Glires</taxon>
        <taxon>Rodentia</taxon>
        <taxon>Myomorpha</taxon>
        <taxon>Muroidea</taxon>
        <taxon>Muridae</taxon>
        <taxon>Murinae</taxon>
        <taxon>Mus</taxon>
        <taxon>Mus</taxon>
    </lineage>
</organism>
<protein>
    <recommendedName>
        <fullName>Doublesex- and mab-3-related transcription factor A1</fullName>
    </recommendedName>
    <alternativeName>
        <fullName>Doublesex- and mab-3-related transcription factor 4</fullName>
    </alternativeName>
</protein>
<reference key="1">
    <citation type="journal article" date="2003" name="Gene Expr. Patterns">
        <title>Sexually dimorphic expression of multiple doublesex-related genes in the embryonic mouse gonad.</title>
        <authorList>
            <person name="Kim S."/>
            <person name="Kettlewell J.R."/>
            <person name="Anderson R.C."/>
            <person name="Bardwell V.J."/>
            <person name="Zarkower D."/>
        </authorList>
    </citation>
    <scope>NUCLEOTIDE SEQUENCE [MRNA]</scope>
    <scope>TISSUE SPECIFICITY</scope>
    <scope>DEVELOPMENTAL STAGE</scope>
    <source>
        <tissue>Spinal ganglion</tissue>
    </source>
</reference>
<reference key="2">
    <citation type="journal article" date="2009" name="PLoS Biol.">
        <title>Lineage-specific biology revealed by a finished genome assembly of the mouse.</title>
        <authorList>
            <person name="Church D.M."/>
            <person name="Goodstadt L."/>
            <person name="Hillier L.W."/>
            <person name="Zody M.C."/>
            <person name="Goldstein S."/>
            <person name="She X."/>
            <person name="Bult C.J."/>
            <person name="Agarwala R."/>
            <person name="Cherry J.L."/>
            <person name="DiCuccio M."/>
            <person name="Hlavina W."/>
            <person name="Kapustin Y."/>
            <person name="Meric P."/>
            <person name="Maglott D."/>
            <person name="Birtle Z."/>
            <person name="Marques A.C."/>
            <person name="Graves T."/>
            <person name="Zhou S."/>
            <person name="Teague B."/>
            <person name="Potamousis K."/>
            <person name="Churas C."/>
            <person name="Place M."/>
            <person name="Herschleb J."/>
            <person name="Runnheim R."/>
            <person name="Forrest D."/>
            <person name="Amos-Landgraf J."/>
            <person name="Schwartz D.C."/>
            <person name="Cheng Z."/>
            <person name="Lindblad-Toh K."/>
            <person name="Eichler E.E."/>
            <person name="Ponting C.P."/>
        </authorList>
    </citation>
    <scope>NUCLEOTIDE SEQUENCE [LARGE SCALE GENOMIC DNA]</scope>
    <source>
        <strain>C57BL/6J</strain>
    </source>
</reference>
<reference key="3">
    <citation type="journal article" date="2006" name="Mol. Cell. Biol.">
        <title>Mice mutant in the DM domain gene Dmrt4 are viable and fertile but have polyovular follicles.</title>
        <authorList>
            <person name="Balciuniene J."/>
            <person name="Bardwell V.J."/>
            <person name="Zarkower D."/>
        </authorList>
    </citation>
    <scope>TISSUE SPECIFICITY</scope>
    <scope>DISRUPTION PHENOTYPE</scope>
</reference>
<sequence>MERLPHGRRDRSGGCRPHLAPGRAAAPASAARSVSSGIPVSATFLRPPGLFLRSTASSGRAGCAPGPGLDRALGAVGCGYPRTPKCARCRNHGVVSALKGHKRFCRWRDCACAKCTLIAERQRVMAAQVALRRQQAQEESEARGLHRLLYQGSSGSGAQASGGSGRTESPQVLNNPMAVAVLGAGASRHPGSRSVPTFEVFQQDYADRKQEPKQRNCESCQSRQEEPVSNTHHHSLGSSKGNVTVEKQGFMSSIPEHPDKSTIILSPCPTDQSGGEDSPRSFSSSDLESGNESEWARDYIATRASLSTVTSRPRDPLGILTRIFPGYKHSRLEGILQFCKGDVVQAIEQILNGREHKPDCRDLARADLENAAFQRASDFSLAGIGFGTLSNKSALSPLEAASAAYGGDSTLYSFNPRLAFSPLRLAYSSPGRALSGFVSPYLTPGLVPALPFRPTLDYAFPGMIREPSHLPSKHLVAGGRLYFRPNQEHL</sequence>
<keyword id="KW-0238">DNA-binding</keyword>
<keyword id="KW-0479">Metal-binding</keyword>
<keyword id="KW-0539">Nucleus</keyword>
<keyword id="KW-1185">Reference proteome</keyword>
<keyword id="KW-0804">Transcription</keyword>
<keyword id="KW-0805">Transcription regulation</keyword>
<keyword id="KW-0862">Zinc</keyword>
<evidence type="ECO:0000255" key="1"/>
<evidence type="ECO:0000255" key="2">
    <source>
        <dbReference type="PROSITE-ProRule" id="PRU00070"/>
    </source>
</evidence>
<evidence type="ECO:0000256" key="3">
    <source>
        <dbReference type="SAM" id="MobiDB-lite"/>
    </source>
</evidence>
<evidence type="ECO:0000269" key="4">
    <source>
    </source>
</evidence>
<evidence type="ECO:0000269" key="5">
    <source>
    </source>
</evidence>
<evidence type="ECO:0000305" key="6"/>
<proteinExistence type="evidence at transcript level"/>
<name>DMRTA_MOUSE</name>
<dbReference type="EMBL" id="AF542047">
    <property type="protein sequence ID" value="AAN77234.1"/>
    <property type="molecule type" value="mRNA"/>
</dbReference>
<dbReference type="EMBL" id="AL772403">
    <property type="status" value="NOT_ANNOTATED_CDS"/>
    <property type="molecule type" value="Genomic_DNA"/>
</dbReference>
<dbReference type="CCDS" id="CCDS18352.1"/>
<dbReference type="RefSeq" id="NP_783578.1">
    <property type="nucleotide sequence ID" value="NM_175647.3"/>
</dbReference>
<dbReference type="SMR" id="Q8CFG4"/>
<dbReference type="FunCoup" id="Q8CFG4">
    <property type="interactions" value="1017"/>
</dbReference>
<dbReference type="STRING" id="10090.ENSMUSP00000057488"/>
<dbReference type="iPTMnet" id="Q8CFG4"/>
<dbReference type="PhosphoSitePlus" id="Q8CFG4"/>
<dbReference type="PaxDb" id="10090-ENSMUSP00000057488"/>
<dbReference type="ProteomicsDB" id="279734"/>
<dbReference type="Antibodypedia" id="24917">
    <property type="antibodies" value="139 antibodies from 27 providers"/>
</dbReference>
<dbReference type="DNASU" id="242523"/>
<dbReference type="Ensembl" id="ENSMUST00000052478.3">
    <property type="protein sequence ID" value="ENSMUSP00000057488.3"/>
    <property type="gene ID" value="ENSMUSG00000043753.3"/>
</dbReference>
<dbReference type="GeneID" id="242523"/>
<dbReference type="KEGG" id="mmu:242523"/>
<dbReference type="UCSC" id="uc008tol.1">
    <property type="organism name" value="mouse"/>
</dbReference>
<dbReference type="AGR" id="MGI:2653627"/>
<dbReference type="CTD" id="63951"/>
<dbReference type="MGI" id="MGI:2653627">
    <property type="gene designation" value="Dmrta1"/>
</dbReference>
<dbReference type="VEuPathDB" id="HostDB:ENSMUSG00000043753"/>
<dbReference type="eggNOG" id="KOG3815">
    <property type="taxonomic scope" value="Eukaryota"/>
</dbReference>
<dbReference type="GeneTree" id="ENSGT00940000160640"/>
<dbReference type="HOGENOM" id="CLU_038477_1_0_1"/>
<dbReference type="InParanoid" id="Q8CFG4"/>
<dbReference type="OMA" id="RELQFMY"/>
<dbReference type="OrthoDB" id="6162476at2759"/>
<dbReference type="PhylomeDB" id="Q8CFG4"/>
<dbReference type="TreeFam" id="TF317837"/>
<dbReference type="BioGRID-ORCS" id="242523">
    <property type="hits" value="2 hits in 76 CRISPR screens"/>
</dbReference>
<dbReference type="PRO" id="PR:Q8CFG4"/>
<dbReference type="Proteomes" id="UP000000589">
    <property type="component" value="Chromosome 4"/>
</dbReference>
<dbReference type="RNAct" id="Q8CFG4">
    <property type="molecule type" value="protein"/>
</dbReference>
<dbReference type="Bgee" id="ENSMUSG00000043753">
    <property type="expression patterns" value="Expressed in otolith organ and 66 other cell types or tissues"/>
</dbReference>
<dbReference type="GO" id="GO:0005634">
    <property type="term" value="C:nucleus"/>
    <property type="evidence" value="ECO:0007669"/>
    <property type="project" value="UniProtKB-SubCell"/>
</dbReference>
<dbReference type="GO" id="GO:0042802">
    <property type="term" value="F:identical protein binding"/>
    <property type="evidence" value="ECO:0000353"/>
    <property type="project" value="MGI"/>
</dbReference>
<dbReference type="GO" id="GO:0046872">
    <property type="term" value="F:metal ion binding"/>
    <property type="evidence" value="ECO:0007669"/>
    <property type="project" value="UniProtKB-KW"/>
</dbReference>
<dbReference type="GO" id="GO:0043565">
    <property type="term" value="F:sequence-specific DNA binding"/>
    <property type="evidence" value="ECO:0000314"/>
    <property type="project" value="MGI"/>
</dbReference>
<dbReference type="GO" id="GO:1990837">
    <property type="term" value="F:sequence-specific double-stranded DNA binding"/>
    <property type="evidence" value="ECO:0007669"/>
    <property type="project" value="Ensembl"/>
</dbReference>
<dbReference type="GO" id="GO:0060179">
    <property type="term" value="P:male mating behavior"/>
    <property type="evidence" value="ECO:0000315"/>
    <property type="project" value="MGI"/>
</dbReference>
<dbReference type="GO" id="GO:0001541">
    <property type="term" value="P:ovarian follicle development"/>
    <property type="evidence" value="ECO:0000315"/>
    <property type="project" value="MGI"/>
</dbReference>
<dbReference type="GO" id="GO:0006355">
    <property type="term" value="P:regulation of DNA-templated transcription"/>
    <property type="evidence" value="ECO:0007669"/>
    <property type="project" value="InterPro"/>
</dbReference>
<dbReference type="CDD" id="cd14370">
    <property type="entry name" value="CUE_DMA"/>
    <property type="match status" value="1"/>
</dbReference>
<dbReference type="FunFam" id="4.10.1040.10:FF:000001">
    <property type="entry name" value="doublesex- and mab-3-related transcription factor 1"/>
    <property type="match status" value="1"/>
</dbReference>
<dbReference type="Gene3D" id="4.10.1040.10">
    <property type="entry name" value="DM DNA-binding domain"/>
    <property type="match status" value="1"/>
</dbReference>
<dbReference type="InterPro" id="IPR001275">
    <property type="entry name" value="DM_DNA-bd"/>
</dbReference>
<dbReference type="InterPro" id="IPR036407">
    <property type="entry name" value="DM_DNA-bd_sf"/>
</dbReference>
<dbReference type="InterPro" id="IPR005173">
    <property type="entry name" value="DMA"/>
</dbReference>
<dbReference type="InterPro" id="IPR026607">
    <property type="entry name" value="DMRT"/>
</dbReference>
<dbReference type="InterPro" id="IPR046472">
    <property type="entry name" value="DMRT5_1_DMB_dom"/>
</dbReference>
<dbReference type="InterPro" id="IPR009060">
    <property type="entry name" value="UBA-like_sf"/>
</dbReference>
<dbReference type="PANTHER" id="PTHR12322">
    <property type="entry name" value="DOUBLESEX AND MAB-3 RELATED TRANSCRIPTION FACTOR DMRT"/>
    <property type="match status" value="1"/>
</dbReference>
<dbReference type="PANTHER" id="PTHR12322:SF71">
    <property type="entry name" value="DOUBLESEX- AND MAB-3-RELATED TRANSCRIPTION FACTOR A1"/>
    <property type="match status" value="1"/>
</dbReference>
<dbReference type="Pfam" id="PF00751">
    <property type="entry name" value="DM"/>
    <property type="match status" value="1"/>
</dbReference>
<dbReference type="Pfam" id="PF03474">
    <property type="entry name" value="DMA"/>
    <property type="match status" value="1"/>
</dbReference>
<dbReference type="Pfam" id="PF20624">
    <property type="entry name" value="DMRT5_DMB"/>
    <property type="match status" value="1"/>
</dbReference>
<dbReference type="SMART" id="SM00301">
    <property type="entry name" value="DM"/>
    <property type="match status" value="1"/>
</dbReference>
<dbReference type="SUPFAM" id="SSF82927">
    <property type="entry name" value="Cysteine-rich DNA binding domain, (DM domain)"/>
    <property type="match status" value="1"/>
</dbReference>
<dbReference type="SUPFAM" id="SSF46934">
    <property type="entry name" value="UBA-like"/>
    <property type="match status" value="1"/>
</dbReference>
<dbReference type="PROSITE" id="PS40000">
    <property type="entry name" value="DM_1"/>
    <property type="match status" value="1"/>
</dbReference>
<dbReference type="PROSITE" id="PS50809">
    <property type="entry name" value="DM_2"/>
    <property type="match status" value="1"/>
</dbReference>
<accession>Q8CFG4</accession>
<accession>A2AL09</accession>
<feature type="chain" id="PRO_0000242701" description="Doublesex- and mab-3-related transcription factor A1">
    <location>
        <begin position="1"/>
        <end position="490"/>
    </location>
</feature>
<feature type="domain" description="DMA" evidence="1">
    <location>
        <begin position="314"/>
        <end position="349"/>
    </location>
</feature>
<feature type="DNA-binding region" description="DM" evidence="2">
    <location>
        <begin position="86"/>
        <end position="133"/>
    </location>
</feature>
<feature type="region of interest" description="Disordered" evidence="3">
    <location>
        <begin position="1"/>
        <end position="31"/>
    </location>
</feature>
<feature type="region of interest" description="Disordered" evidence="3">
    <location>
        <begin position="152"/>
        <end position="171"/>
    </location>
</feature>
<feature type="region of interest" description="Disordered" evidence="3">
    <location>
        <begin position="207"/>
        <end position="289"/>
    </location>
</feature>
<feature type="compositionally biased region" description="Basic and acidic residues" evidence="3">
    <location>
        <begin position="1"/>
        <end position="13"/>
    </location>
</feature>
<feature type="compositionally biased region" description="Low complexity" evidence="3">
    <location>
        <begin position="20"/>
        <end position="31"/>
    </location>
</feature>
<feature type="compositionally biased region" description="Basic and acidic residues" evidence="3">
    <location>
        <begin position="207"/>
        <end position="216"/>
    </location>
</feature>
<feature type="compositionally biased region" description="Polar residues" evidence="3">
    <location>
        <begin position="217"/>
        <end position="242"/>
    </location>
</feature>
<feature type="compositionally biased region" description="Polar residues" evidence="3">
    <location>
        <begin position="269"/>
        <end position="289"/>
    </location>
</feature>
<comment type="subcellular location">
    <subcellularLocation>
        <location evidence="2">Nucleus</location>
    </subcellularLocation>
</comment>
<comment type="tissue specificity">
    <text evidence="4 5">Widely expressed, with highest levels in ovary, testis, epididymis, preputial gland, vomeronasal organ, liver, salivary glands and heart. Also expressed throughout the brain with highest levels in the olfactory bulbs and medulla. Detected at similar levels in gonads of both sexes.</text>
</comment>
<comment type="developmental stage">
    <text evidence="4">Expressed in gonads from 11.5 dpc onward. Expressed in the genital ridge at 11.5 dpc and in the seminiferous tubules at 12.5 dpc.</text>
</comment>
<comment type="disruption phenotype">
    <text evidence="5">Mutant animals are viable and fertile, with no obvious anatomical defects. Ovaries from mutant females may have an elevated number of polyovular follicles. 25% of mutant males consistently exhibit copulatory behavior toward other males.</text>
</comment>
<comment type="similarity">
    <text evidence="6">Belongs to the DMRT family.</text>
</comment>